<proteinExistence type="inferred from homology"/>
<keyword id="KW-0963">Cytoplasm</keyword>
<keyword id="KW-0240">DNA-directed RNA polymerase</keyword>
<keyword id="KW-0548">Nucleotidyltransferase</keyword>
<keyword id="KW-1185">Reference proteome</keyword>
<keyword id="KW-0804">Transcription</keyword>
<keyword id="KW-0808">Transferase</keyword>
<sequence>MNLKVLKKTEDELRIEFEGERHTLLNLLRSELLEDERVVIATYDAKFPIMDNPVFRLKTRGVDPLDVIRDASARIADLCDEFLREYEEAVR</sequence>
<comment type="function">
    <text evidence="1">DNA-dependent RNA polymerase (RNAP) catalyzes the transcription of DNA into RNA using the four ribonucleoside triphosphates as substrates.</text>
</comment>
<comment type="catalytic activity">
    <reaction evidence="1">
        <text>RNA(n) + a ribonucleoside 5'-triphosphate = RNA(n+1) + diphosphate</text>
        <dbReference type="Rhea" id="RHEA:21248"/>
        <dbReference type="Rhea" id="RHEA-COMP:14527"/>
        <dbReference type="Rhea" id="RHEA-COMP:17342"/>
        <dbReference type="ChEBI" id="CHEBI:33019"/>
        <dbReference type="ChEBI" id="CHEBI:61557"/>
        <dbReference type="ChEBI" id="CHEBI:140395"/>
        <dbReference type="EC" id="2.7.7.6"/>
    </reaction>
</comment>
<comment type="subunit">
    <text evidence="1">Part of the RNA polymerase complex.</text>
</comment>
<comment type="subcellular location">
    <subcellularLocation>
        <location evidence="1">Cytoplasm</location>
    </subcellularLocation>
</comment>
<comment type="similarity">
    <text evidence="1">Belongs to the archaeal Rpo11/eukaryotic RPB11/RPC19 RNA polymerase subunit family.</text>
</comment>
<name>RPO11_METTP</name>
<reference key="1">
    <citation type="submission" date="2006-10" db="EMBL/GenBank/DDBJ databases">
        <title>Complete sequence of Methanosaeta thermophila PT.</title>
        <authorList>
            <consortium name="US DOE Joint Genome Institute"/>
            <person name="Copeland A."/>
            <person name="Lucas S."/>
            <person name="Lapidus A."/>
            <person name="Barry K."/>
            <person name="Detter J.C."/>
            <person name="Glavina del Rio T."/>
            <person name="Hammon N."/>
            <person name="Israni S."/>
            <person name="Pitluck S."/>
            <person name="Chain P."/>
            <person name="Malfatti S."/>
            <person name="Shin M."/>
            <person name="Vergez L."/>
            <person name="Schmutz J."/>
            <person name="Larimer F."/>
            <person name="Land M."/>
            <person name="Hauser L."/>
            <person name="Kyrpides N."/>
            <person name="Kim E."/>
            <person name="Smith K.S."/>
            <person name="Ingram-Smith C."/>
            <person name="Richardson P."/>
        </authorList>
    </citation>
    <scope>NUCLEOTIDE SEQUENCE [LARGE SCALE GENOMIC DNA]</scope>
    <source>
        <strain>DSM 6194 / JCM 14653 / NBRC 101360 / PT</strain>
    </source>
</reference>
<evidence type="ECO:0000255" key="1">
    <source>
        <dbReference type="HAMAP-Rule" id="MF_00261"/>
    </source>
</evidence>
<protein>
    <recommendedName>
        <fullName evidence="1">DNA-directed RNA polymerase subunit Rpo11</fullName>
        <ecNumber evidence="1">2.7.7.6</ecNumber>
    </recommendedName>
    <alternativeName>
        <fullName evidence="1">DNA-directed RNA polymerase subunit L</fullName>
    </alternativeName>
</protein>
<accession>A0B533</accession>
<gene>
    <name evidence="1" type="primary">rpo11</name>
    <name evidence="1" type="synonym">rpoL</name>
    <name type="ordered locus">Mthe_0004</name>
</gene>
<feature type="chain" id="PRO_1000005784" description="DNA-directed RNA polymerase subunit Rpo11">
    <location>
        <begin position="1"/>
        <end position="91"/>
    </location>
</feature>
<organism>
    <name type="scientific">Methanothrix thermoacetophila (strain DSM 6194 / JCM 14653 / NBRC 101360 / PT)</name>
    <name type="common">Methanosaeta thermophila</name>
    <dbReference type="NCBI Taxonomy" id="349307"/>
    <lineage>
        <taxon>Archaea</taxon>
        <taxon>Methanobacteriati</taxon>
        <taxon>Methanobacteriota</taxon>
        <taxon>Stenosarchaea group</taxon>
        <taxon>Methanomicrobia</taxon>
        <taxon>Methanotrichales</taxon>
        <taxon>Methanotrichaceae</taxon>
        <taxon>Methanothrix</taxon>
    </lineage>
</organism>
<dbReference type="EC" id="2.7.7.6" evidence="1"/>
<dbReference type="EMBL" id="CP000477">
    <property type="protein sequence ID" value="ABK13807.1"/>
    <property type="molecule type" value="Genomic_DNA"/>
</dbReference>
<dbReference type="RefSeq" id="WP_011695208.1">
    <property type="nucleotide sequence ID" value="NC_008553.1"/>
</dbReference>
<dbReference type="SMR" id="A0B533"/>
<dbReference type="STRING" id="349307.Mthe_0004"/>
<dbReference type="GeneID" id="4462859"/>
<dbReference type="KEGG" id="mtp:Mthe_0004"/>
<dbReference type="HOGENOM" id="CLU_090381_5_3_2"/>
<dbReference type="OrthoDB" id="24205at2157"/>
<dbReference type="Proteomes" id="UP000000674">
    <property type="component" value="Chromosome"/>
</dbReference>
<dbReference type="GO" id="GO:0005737">
    <property type="term" value="C:cytoplasm"/>
    <property type="evidence" value="ECO:0007669"/>
    <property type="project" value="UniProtKB-SubCell"/>
</dbReference>
<dbReference type="GO" id="GO:0000428">
    <property type="term" value="C:DNA-directed RNA polymerase complex"/>
    <property type="evidence" value="ECO:0007669"/>
    <property type="project" value="UniProtKB-KW"/>
</dbReference>
<dbReference type="GO" id="GO:0003899">
    <property type="term" value="F:DNA-directed RNA polymerase activity"/>
    <property type="evidence" value="ECO:0007669"/>
    <property type="project" value="UniProtKB-UniRule"/>
</dbReference>
<dbReference type="GO" id="GO:0046983">
    <property type="term" value="F:protein dimerization activity"/>
    <property type="evidence" value="ECO:0007669"/>
    <property type="project" value="InterPro"/>
</dbReference>
<dbReference type="GO" id="GO:0006351">
    <property type="term" value="P:DNA-templated transcription"/>
    <property type="evidence" value="ECO:0007669"/>
    <property type="project" value="UniProtKB-UniRule"/>
</dbReference>
<dbReference type="CDD" id="cd06927">
    <property type="entry name" value="RNAP_L"/>
    <property type="match status" value="1"/>
</dbReference>
<dbReference type="Gene3D" id="3.30.1360.10">
    <property type="entry name" value="RNA polymerase, RBP11-like subunit"/>
    <property type="match status" value="1"/>
</dbReference>
<dbReference type="HAMAP" id="MF_00261">
    <property type="entry name" value="RNApol_arch_Rpo11"/>
    <property type="match status" value="1"/>
</dbReference>
<dbReference type="InterPro" id="IPR036603">
    <property type="entry name" value="RBP11-like"/>
</dbReference>
<dbReference type="InterPro" id="IPR009025">
    <property type="entry name" value="RBP11-like_dimer"/>
</dbReference>
<dbReference type="InterPro" id="IPR022905">
    <property type="entry name" value="Rpo11-like"/>
</dbReference>
<dbReference type="NCBIfam" id="NF002237">
    <property type="entry name" value="PRK01146.2-1"/>
    <property type="match status" value="1"/>
</dbReference>
<dbReference type="PANTHER" id="PTHR13946">
    <property type="entry name" value="DNA-DIRECTED RNA POLYMERASE I,II,III"/>
    <property type="match status" value="1"/>
</dbReference>
<dbReference type="PANTHER" id="PTHR13946:SF28">
    <property type="entry name" value="DNA-DIRECTED RNA POLYMERASES I AND III SUBUNIT RPAC2"/>
    <property type="match status" value="1"/>
</dbReference>
<dbReference type="Pfam" id="PF13656">
    <property type="entry name" value="RNA_pol_L_2"/>
    <property type="match status" value="1"/>
</dbReference>
<dbReference type="SUPFAM" id="SSF55257">
    <property type="entry name" value="RBP11-like subunits of RNA polymerase"/>
    <property type="match status" value="1"/>
</dbReference>